<proteinExistence type="inferred from homology"/>
<gene>
    <name evidence="1" type="primary">hfq</name>
    <name type="ordered locus">Spea_3540</name>
</gene>
<evidence type="ECO:0000255" key="1">
    <source>
        <dbReference type="HAMAP-Rule" id="MF_00436"/>
    </source>
</evidence>
<evidence type="ECO:0000255" key="2">
    <source>
        <dbReference type="PROSITE-ProRule" id="PRU01346"/>
    </source>
</evidence>
<evidence type="ECO:0000256" key="3">
    <source>
        <dbReference type="SAM" id="MobiDB-lite"/>
    </source>
</evidence>
<protein>
    <recommendedName>
        <fullName evidence="1">RNA-binding protein Hfq</fullName>
    </recommendedName>
</protein>
<comment type="function">
    <text evidence="1">RNA chaperone that binds small regulatory RNA (sRNAs) and mRNAs to facilitate mRNA translational regulation in response to envelope stress, environmental stress and changes in metabolite concentrations. Also binds with high specificity to tRNAs.</text>
</comment>
<comment type="subunit">
    <text evidence="1">Homohexamer.</text>
</comment>
<comment type="similarity">
    <text evidence="1">Belongs to the Hfq family.</text>
</comment>
<accession>A8H8G6</accession>
<name>HFQ_SHEPA</name>
<organism>
    <name type="scientific">Shewanella pealeana (strain ATCC 700345 / ANG-SQ1)</name>
    <dbReference type="NCBI Taxonomy" id="398579"/>
    <lineage>
        <taxon>Bacteria</taxon>
        <taxon>Pseudomonadati</taxon>
        <taxon>Pseudomonadota</taxon>
        <taxon>Gammaproteobacteria</taxon>
        <taxon>Alteromonadales</taxon>
        <taxon>Shewanellaceae</taxon>
        <taxon>Shewanella</taxon>
    </lineage>
</organism>
<feature type="chain" id="PRO_1000080690" description="RNA-binding protein Hfq">
    <location>
        <begin position="1"/>
        <end position="92"/>
    </location>
</feature>
<feature type="domain" description="Sm" evidence="2">
    <location>
        <begin position="9"/>
        <end position="68"/>
    </location>
</feature>
<feature type="region of interest" description="Disordered" evidence="3">
    <location>
        <begin position="73"/>
        <end position="92"/>
    </location>
</feature>
<feature type="compositionally biased region" description="Polar residues" evidence="3">
    <location>
        <begin position="73"/>
        <end position="82"/>
    </location>
</feature>
<reference key="1">
    <citation type="submission" date="2007-10" db="EMBL/GenBank/DDBJ databases">
        <title>Complete sequence of Shewanella pealeana ATCC 700345.</title>
        <authorList>
            <consortium name="US DOE Joint Genome Institute"/>
            <person name="Copeland A."/>
            <person name="Lucas S."/>
            <person name="Lapidus A."/>
            <person name="Barry K."/>
            <person name="Glavina del Rio T."/>
            <person name="Dalin E."/>
            <person name="Tice H."/>
            <person name="Pitluck S."/>
            <person name="Chertkov O."/>
            <person name="Brettin T."/>
            <person name="Bruce D."/>
            <person name="Detter J.C."/>
            <person name="Han C."/>
            <person name="Schmutz J."/>
            <person name="Larimer F."/>
            <person name="Land M."/>
            <person name="Hauser L."/>
            <person name="Kyrpides N."/>
            <person name="Kim E."/>
            <person name="Zhao J.-S.Z."/>
            <person name="Manno D."/>
            <person name="Hawari J."/>
            <person name="Richardson P."/>
        </authorList>
    </citation>
    <scope>NUCLEOTIDE SEQUENCE [LARGE SCALE GENOMIC DNA]</scope>
    <source>
        <strain>ATCC 700345 / ANG-SQ1</strain>
    </source>
</reference>
<dbReference type="EMBL" id="CP000851">
    <property type="protein sequence ID" value="ABV88853.1"/>
    <property type="molecule type" value="Genomic_DNA"/>
</dbReference>
<dbReference type="RefSeq" id="WP_012156738.1">
    <property type="nucleotide sequence ID" value="NC_009901.1"/>
</dbReference>
<dbReference type="SMR" id="A8H8G6"/>
<dbReference type="STRING" id="398579.Spea_3540"/>
<dbReference type="KEGG" id="spl:Spea_3540"/>
<dbReference type="eggNOG" id="COG1923">
    <property type="taxonomic scope" value="Bacteria"/>
</dbReference>
<dbReference type="HOGENOM" id="CLU_113688_2_2_6"/>
<dbReference type="OrthoDB" id="9799751at2"/>
<dbReference type="Proteomes" id="UP000002608">
    <property type="component" value="Chromosome"/>
</dbReference>
<dbReference type="GO" id="GO:0005829">
    <property type="term" value="C:cytosol"/>
    <property type="evidence" value="ECO:0007669"/>
    <property type="project" value="TreeGrafter"/>
</dbReference>
<dbReference type="GO" id="GO:0003723">
    <property type="term" value="F:RNA binding"/>
    <property type="evidence" value="ECO:0007669"/>
    <property type="project" value="UniProtKB-UniRule"/>
</dbReference>
<dbReference type="GO" id="GO:0006355">
    <property type="term" value="P:regulation of DNA-templated transcription"/>
    <property type="evidence" value="ECO:0007669"/>
    <property type="project" value="InterPro"/>
</dbReference>
<dbReference type="GO" id="GO:0043487">
    <property type="term" value="P:regulation of RNA stability"/>
    <property type="evidence" value="ECO:0007669"/>
    <property type="project" value="TreeGrafter"/>
</dbReference>
<dbReference type="GO" id="GO:0045974">
    <property type="term" value="P:regulation of translation, ncRNA-mediated"/>
    <property type="evidence" value="ECO:0007669"/>
    <property type="project" value="TreeGrafter"/>
</dbReference>
<dbReference type="CDD" id="cd01716">
    <property type="entry name" value="Hfq"/>
    <property type="match status" value="1"/>
</dbReference>
<dbReference type="FunFam" id="2.30.30.100:FF:000001">
    <property type="entry name" value="RNA-binding protein Hfq"/>
    <property type="match status" value="1"/>
</dbReference>
<dbReference type="Gene3D" id="2.30.30.100">
    <property type="match status" value="1"/>
</dbReference>
<dbReference type="HAMAP" id="MF_00436">
    <property type="entry name" value="Hfq"/>
    <property type="match status" value="1"/>
</dbReference>
<dbReference type="InterPro" id="IPR005001">
    <property type="entry name" value="Hfq"/>
</dbReference>
<dbReference type="InterPro" id="IPR010920">
    <property type="entry name" value="LSM_dom_sf"/>
</dbReference>
<dbReference type="InterPro" id="IPR047575">
    <property type="entry name" value="Sm"/>
</dbReference>
<dbReference type="NCBIfam" id="TIGR02383">
    <property type="entry name" value="Hfq"/>
    <property type="match status" value="1"/>
</dbReference>
<dbReference type="NCBIfam" id="NF001602">
    <property type="entry name" value="PRK00395.1"/>
    <property type="match status" value="1"/>
</dbReference>
<dbReference type="PANTHER" id="PTHR34772">
    <property type="entry name" value="RNA-BINDING PROTEIN HFQ"/>
    <property type="match status" value="1"/>
</dbReference>
<dbReference type="PANTHER" id="PTHR34772:SF1">
    <property type="entry name" value="RNA-BINDING PROTEIN HFQ"/>
    <property type="match status" value="1"/>
</dbReference>
<dbReference type="Pfam" id="PF17209">
    <property type="entry name" value="Hfq"/>
    <property type="match status" value="1"/>
</dbReference>
<dbReference type="SUPFAM" id="SSF50182">
    <property type="entry name" value="Sm-like ribonucleoproteins"/>
    <property type="match status" value="1"/>
</dbReference>
<dbReference type="PROSITE" id="PS52002">
    <property type="entry name" value="SM"/>
    <property type="match status" value="1"/>
</dbReference>
<sequence>MAKGQSLQDPFLNALRRERVPVSIYLVNGIKLQGQVESFDQFVILLKNTVSQMVYKHAISTVVPSRPFNVSNHQATNAQAGYNAQHDDGDEK</sequence>
<keyword id="KW-1185">Reference proteome</keyword>
<keyword id="KW-0694">RNA-binding</keyword>
<keyword id="KW-0346">Stress response</keyword>